<feature type="chain" id="PRO_1000095718" description="Tryptophan synthase alpha chain">
    <location>
        <begin position="1"/>
        <end position="267"/>
    </location>
</feature>
<feature type="active site" description="Proton acceptor" evidence="1">
    <location>
        <position position="49"/>
    </location>
</feature>
<feature type="active site" description="Proton acceptor" evidence="1">
    <location>
        <position position="60"/>
    </location>
</feature>
<name>TRPA_CITBB</name>
<organism>
    <name type="scientific">Citrifermentans bemidjiense (strain ATCC BAA-1014 / DSM 16622 / JCM 12645 / Bem)</name>
    <name type="common">Geobacter bemidjiensis</name>
    <dbReference type="NCBI Taxonomy" id="404380"/>
    <lineage>
        <taxon>Bacteria</taxon>
        <taxon>Pseudomonadati</taxon>
        <taxon>Thermodesulfobacteriota</taxon>
        <taxon>Desulfuromonadia</taxon>
        <taxon>Geobacterales</taxon>
        <taxon>Geobacteraceae</taxon>
        <taxon>Citrifermentans</taxon>
    </lineage>
</organism>
<proteinExistence type="inferred from homology"/>
<evidence type="ECO:0000255" key="1">
    <source>
        <dbReference type="HAMAP-Rule" id="MF_00131"/>
    </source>
</evidence>
<protein>
    <recommendedName>
        <fullName evidence="1">Tryptophan synthase alpha chain</fullName>
        <ecNumber evidence="1">4.2.1.20</ecNumber>
    </recommendedName>
</protein>
<keyword id="KW-0028">Amino-acid biosynthesis</keyword>
<keyword id="KW-0057">Aromatic amino acid biosynthesis</keyword>
<keyword id="KW-0456">Lyase</keyword>
<keyword id="KW-1185">Reference proteome</keyword>
<keyword id="KW-0822">Tryptophan biosynthesis</keyword>
<comment type="function">
    <text evidence="1">The alpha subunit is responsible for the aldol cleavage of indoleglycerol phosphate to indole and glyceraldehyde 3-phosphate.</text>
</comment>
<comment type="catalytic activity">
    <reaction evidence="1">
        <text>(1S,2R)-1-C-(indol-3-yl)glycerol 3-phosphate + L-serine = D-glyceraldehyde 3-phosphate + L-tryptophan + H2O</text>
        <dbReference type="Rhea" id="RHEA:10532"/>
        <dbReference type="ChEBI" id="CHEBI:15377"/>
        <dbReference type="ChEBI" id="CHEBI:33384"/>
        <dbReference type="ChEBI" id="CHEBI:57912"/>
        <dbReference type="ChEBI" id="CHEBI:58866"/>
        <dbReference type="ChEBI" id="CHEBI:59776"/>
        <dbReference type="EC" id="4.2.1.20"/>
    </reaction>
</comment>
<comment type="pathway">
    <text evidence="1">Amino-acid biosynthesis; L-tryptophan biosynthesis; L-tryptophan from chorismate: step 5/5.</text>
</comment>
<comment type="subunit">
    <text evidence="1">Tetramer of two alpha and two beta chains.</text>
</comment>
<comment type="similarity">
    <text evidence="1">Belongs to the TrpA family.</text>
</comment>
<dbReference type="EC" id="4.2.1.20" evidence="1"/>
<dbReference type="EMBL" id="CP001124">
    <property type="protein sequence ID" value="ACH40345.1"/>
    <property type="molecule type" value="Genomic_DNA"/>
</dbReference>
<dbReference type="RefSeq" id="WP_012531778.1">
    <property type="nucleotide sequence ID" value="NC_011146.1"/>
</dbReference>
<dbReference type="SMR" id="B5EAK6"/>
<dbReference type="STRING" id="404380.Gbem_3350"/>
<dbReference type="KEGG" id="gbm:Gbem_3350"/>
<dbReference type="eggNOG" id="COG0159">
    <property type="taxonomic scope" value="Bacteria"/>
</dbReference>
<dbReference type="HOGENOM" id="CLU_016734_0_0_7"/>
<dbReference type="OrthoDB" id="9804578at2"/>
<dbReference type="UniPathway" id="UPA00035">
    <property type="reaction ID" value="UER00044"/>
</dbReference>
<dbReference type="Proteomes" id="UP000008825">
    <property type="component" value="Chromosome"/>
</dbReference>
<dbReference type="GO" id="GO:0005829">
    <property type="term" value="C:cytosol"/>
    <property type="evidence" value="ECO:0007669"/>
    <property type="project" value="TreeGrafter"/>
</dbReference>
<dbReference type="GO" id="GO:0004834">
    <property type="term" value="F:tryptophan synthase activity"/>
    <property type="evidence" value="ECO:0007669"/>
    <property type="project" value="UniProtKB-UniRule"/>
</dbReference>
<dbReference type="CDD" id="cd04724">
    <property type="entry name" value="Tryptophan_synthase_alpha"/>
    <property type="match status" value="1"/>
</dbReference>
<dbReference type="FunFam" id="3.20.20.70:FF:000037">
    <property type="entry name" value="Tryptophan synthase alpha chain"/>
    <property type="match status" value="1"/>
</dbReference>
<dbReference type="Gene3D" id="3.20.20.70">
    <property type="entry name" value="Aldolase class I"/>
    <property type="match status" value="1"/>
</dbReference>
<dbReference type="HAMAP" id="MF_00131">
    <property type="entry name" value="Trp_synth_alpha"/>
    <property type="match status" value="1"/>
</dbReference>
<dbReference type="InterPro" id="IPR013785">
    <property type="entry name" value="Aldolase_TIM"/>
</dbReference>
<dbReference type="InterPro" id="IPR011060">
    <property type="entry name" value="RibuloseP-bd_barrel"/>
</dbReference>
<dbReference type="InterPro" id="IPR018204">
    <property type="entry name" value="Trp_synthase_alpha_AS"/>
</dbReference>
<dbReference type="InterPro" id="IPR002028">
    <property type="entry name" value="Trp_synthase_suA"/>
</dbReference>
<dbReference type="NCBIfam" id="TIGR00262">
    <property type="entry name" value="trpA"/>
    <property type="match status" value="1"/>
</dbReference>
<dbReference type="PANTHER" id="PTHR43406:SF1">
    <property type="entry name" value="TRYPTOPHAN SYNTHASE ALPHA CHAIN, CHLOROPLASTIC"/>
    <property type="match status" value="1"/>
</dbReference>
<dbReference type="PANTHER" id="PTHR43406">
    <property type="entry name" value="TRYPTOPHAN SYNTHASE, ALPHA CHAIN"/>
    <property type="match status" value="1"/>
</dbReference>
<dbReference type="Pfam" id="PF00290">
    <property type="entry name" value="Trp_syntA"/>
    <property type="match status" value="1"/>
</dbReference>
<dbReference type="SUPFAM" id="SSF51366">
    <property type="entry name" value="Ribulose-phoshate binding barrel"/>
    <property type="match status" value="1"/>
</dbReference>
<dbReference type="PROSITE" id="PS00167">
    <property type="entry name" value="TRP_SYNTHASE_ALPHA"/>
    <property type="match status" value="1"/>
</dbReference>
<reference key="1">
    <citation type="submission" date="2008-07" db="EMBL/GenBank/DDBJ databases">
        <title>Complete sequence of Geobacter bemidjiensis BEM.</title>
        <authorList>
            <consortium name="US DOE Joint Genome Institute"/>
            <person name="Lucas S."/>
            <person name="Copeland A."/>
            <person name="Lapidus A."/>
            <person name="Glavina del Rio T."/>
            <person name="Dalin E."/>
            <person name="Tice H."/>
            <person name="Bruce D."/>
            <person name="Goodwin L."/>
            <person name="Pitluck S."/>
            <person name="Kiss H."/>
            <person name="Brettin T."/>
            <person name="Detter J.C."/>
            <person name="Han C."/>
            <person name="Kuske C.R."/>
            <person name="Schmutz J."/>
            <person name="Larimer F."/>
            <person name="Land M."/>
            <person name="Hauser L."/>
            <person name="Kyrpides N."/>
            <person name="Lykidis A."/>
            <person name="Lovley D."/>
            <person name="Richardson P."/>
        </authorList>
    </citation>
    <scope>NUCLEOTIDE SEQUENCE [LARGE SCALE GENOMIC DNA]</scope>
    <source>
        <strain>ATCC BAA-1014 / DSM 16622 / JCM 12645 / Bem</strain>
    </source>
</reference>
<gene>
    <name evidence="1" type="primary">trpA</name>
    <name type="ordered locus">Gbem_3350</name>
</gene>
<sequence>MSRISDRFASLKERGEKALVTFVTAGDPDLATTEKVVLELERAGADLIELGVPFSDPMADGPTIQLSSDRALASGTTLPAILELVSRLREKTQVPIVLMGYFNPIFAYGSERFAFDAAQAGVDALLVVDLPPEEAAELKGATDSCGLDLIFLLTPTSDGSRIASVARQGSGFIYYVSVTGVTGARSAVADDLAARVTEVRGALELPLVVGFGISTPEQAGEVARAADGVVVGSALVKYFEKYQGAELLEQLGGFVSALKQGVLKGSR</sequence>
<accession>B5EAK6</accession>